<gene>
    <name evidence="1" type="primary">plsX</name>
    <name type="ordered locus">WRi_009340</name>
</gene>
<accession>C0R408</accession>
<evidence type="ECO:0000255" key="1">
    <source>
        <dbReference type="HAMAP-Rule" id="MF_00019"/>
    </source>
</evidence>
<organism>
    <name type="scientific">Wolbachia sp. subsp. Drosophila simulans (strain wRi)</name>
    <dbReference type="NCBI Taxonomy" id="66084"/>
    <lineage>
        <taxon>Bacteria</taxon>
        <taxon>Pseudomonadati</taxon>
        <taxon>Pseudomonadota</taxon>
        <taxon>Alphaproteobacteria</taxon>
        <taxon>Rickettsiales</taxon>
        <taxon>Anaplasmataceae</taxon>
        <taxon>Wolbachieae</taxon>
        <taxon>Wolbachia</taxon>
    </lineage>
</organism>
<proteinExistence type="inferred from homology"/>
<protein>
    <recommendedName>
        <fullName evidence="1">Phosphate acyltransferase</fullName>
        <ecNumber evidence="1">2.3.1.274</ecNumber>
    </recommendedName>
    <alternativeName>
        <fullName evidence="1">Acyl-ACP phosphotransacylase</fullName>
    </alternativeName>
    <alternativeName>
        <fullName evidence="1">Acyl-[acyl-carrier-protein]--phosphate acyltransferase</fullName>
    </alternativeName>
    <alternativeName>
        <fullName evidence="1">Phosphate-acyl-ACP acyltransferase</fullName>
    </alternativeName>
</protein>
<keyword id="KW-0963">Cytoplasm</keyword>
<keyword id="KW-0444">Lipid biosynthesis</keyword>
<keyword id="KW-0443">Lipid metabolism</keyword>
<keyword id="KW-0594">Phospholipid biosynthesis</keyword>
<keyword id="KW-1208">Phospholipid metabolism</keyword>
<keyword id="KW-0808">Transferase</keyword>
<sequence>MLSTVNNNIVIALDAMGGDFAPLSVIHGAGFFLDNLVDPGIKVFFHIYGDKEEVSPLLLKYKKVSNNSEFTHCSDNVLANDKPSFALRHRKDSSMKAAIVAVKEGKAFGVVSSGNTGALMAISRFVLGTLPNIYRPAIASICPTKTKSFALLDLGANVDCNADSLFQFALMGSIFAKIALKIDNPEVALLNIGTEEVKGNDSVRGAFELLKNAPGINFKGYIEASEFLEGNIDVIVADGFVGNVMLKTAEATASTFINLIKQEVFNSWIAKMLVGILLKSKLNKALTRFNPKIRSGAMFLGLNGIIIKSHGNSDAISFAHAIKFAVNAISENLNQKIINGVSHIE</sequence>
<name>PLSX_WOLWR</name>
<dbReference type="EC" id="2.3.1.274" evidence="1"/>
<dbReference type="EMBL" id="CP001391">
    <property type="protein sequence ID" value="ACN95650.1"/>
    <property type="molecule type" value="Genomic_DNA"/>
</dbReference>
<dbReference type="RefSeq" id="WP_007548959.1">
    <property type="nucleotide sequence ID" value="NZ_MKIF01000065.1"/>
</dbReference>
<dbReference type="SMR" id="C0R408"/>
<dbReference type="STRING" id="66084.WRi_009340"/>
<dbReference type="KEGG" id="wri:WRi_009340"/>
<dbReference type="HOGENOM" id="CLU_039379_1_0_5"/>
<dbReference type="UniPathway" id="UPA00085"/>
<dbReference type="Proteomes" id="UP000001293">
    <property type="component" value="Chromosome"/>
</dbReference>
<dbReference type="GO" id="GO:0005737">
    <property type="term" value="C:cytoplasm"/>
    <property type="evidence" value="ECO:0007669"/>
    <property type="project" value="UniProtKB-SubCell"/>
</dbReference>
<dbReference type="GO" id="GO:0043811">
    <property type="term" value="F:phosphate:acyl-[acyl carrier protein] acyltransferase activity"/>
    <property type="evidence" value="ECO:0007669"/>
    <property type="project" value="UniProtKB-UniRule"/>
</dbReference>
<dbReference type="GO" id="GO:0006633">
    <property type="term" value="P:fatty acid biosynthetic process"/>
    <property type="evidence" value="ECO:0007669"/>
    <property type="project" value="UniProtKB-UniRule"/>
</dbReference>
<dbReference type="GO" id="GO:0008654">
    <property type="term" value="P:phospholipid biosynthetic process"/>
    <property type="evidence" value="ECO:0007669"/>
    <property type="project" value="UniProtKB-KW"/>
</dbReference>
<dbReference type="Gene3D" id="3.40.718.10">
    <property type="entry name" value="Isopropylmalate Dehydrogenase"/>
    <property type="match status" value="1"/>
</dbReference>
<dbReference type="HAMAP" id="MF_00019">
    <property type="entry name" value="PlsX"/>
    <property type="match status" value="1"/>
</dbReference>
<dbReference type="InterPro" id="IPR003664">
    <property type="entry name" value="FA_synthesis"/>
</dbReference>
<dbReference type="InterPro" id="IPR012281">
    <property type="entry name" value="Phospholipid_synth_PlsX-like"/>
</dbReference>
<dbReference type="NCBIfam" id="TIGR00182">
    <property type="entry name" value="plsX"/>
    <property type="match status" value="1"/>
</dbReference>
<dbReference type="PANTHER" id="PTHR30100">
    <property type="entry name" value="FATTY ACID/PHOSPHOLIPID SYNTHESIS PROTEIN PLSX"/>
    <property type="match status" value="1"/>
</dbReference>
<dbReference type="PANTHER" id="PTHR30100:SF1">
    <property type="entry name" value="PHOSPHATE ACYLTRANSFERASE"/>
    <property type="match status" value="1"/>
</dbReference>
<dbReference type="Pfam" id="PF02504">
    <property type="entry name" value="FA_synthesis"/>
    <property type="match status" value="1"/>
</dbReference>
<dbReference type="PIRSF" id="PIRSF002465">
    <property type="entry name" value="Phsphlp_syn_PlsX"/>
    <property type="match status" value="1"/>
</dbReference>
<dbReference type="SUPFAM" id="SSF53659">
    <property type="entry name" value="Isocitrate/Isopropylmalate dehydrogenase-like"/>
    <property type="match status" value="1"/>
</dbReference>
<comment type="function">
    <text evidence="1">Catalyzes the reversible formation of acyl-phosphate (acyl-PO(4)) from acyl-[acyl-carrier-protein] (acyl-ACP). This enzyme utilizes acyl-ACP as fatty acyl donor, but not acyl-CoA.</text>
</comment>
<comment type="catalytic activity">
    <reaction evidence="1">
        <text>a fatty acyl-[ACP] + phosphate = an acyl phosphate + holo-[ACP]</text>
        <dbReference type="Rhea" id="RHEA:42292"/>
        <dbReference type="Rhea" id="RHEA-COMP:9685"/>
        <dbReference type="Rhea" id="RHEA-COMP:14125"/>
        <dbReference type="ChEBI" id="CHEBI:43474"/>
        <dbReference type="ChEBI" id="CHEBI:59918"/>
        <dbReference type="ChEBI" id="CHEBI:64479"/>
        <dbReference type="ChEBI" id="CHEBI:138651"/>
        <dbReference type="EC" id="2.3.1.274"/>
    </reaction>
</comment>
<comment type="pathway">
    <text evidence="1">Lipid metabolism; phospholipid metabolism.</text>
</comment>
<comment type="subunit">
    <text evidence="1">Homodimer. Probably interacts with PlsY.</text>
</comment>
<comment type="subcellular location">
    <subcellularLocation>
        <location evidence="1">Cytoplasm</location>
    </subcellularLocation>
    <text evidence="1">Associated with the membrane possibly through PlsY.</text>
</comment>
<comment type="similarity">
    <text evidence="1">Belongs to the PlsX family.</text>
</comment>
<reference key="1">
    <citation type="journal article" date="2009" name="Proc. Natl. Acad. Sci. U.S.A.">
        <title>The mosaic genome structure of the Wolbachia wRi strain infecting Drosophila simulans.</title>
        <authorList>
            <person name="Klasson L."/>
            <person name="Westberg J."/>
            <person name="Sapountzis P."/>
            <person name="Naeslund K."/>
            <person name="Lutnaes Y."/>
            <person name="Darby A.C."/>
            <person name="Veneti Z."/>
            <person name="Chen L."/>
            <person name="Braig H.R."/>
            <person name="Garrett R."/>
            <person name="Bourtzis K."/>
            <person name="Andersson S.G."/>
        </authorList>
    </citation>
    <scope>NUCLEOTIDE SEQUENCE [LARGE SCALE GENOMIC DNA]</scope>
    <source>
        <strain>wRi</strain>
    </source>
</reference>
<feature type="chain" id="PRO_1000193157" description="Phosphate acyltransferase">
    <location>
        <begin position="1"/>
        <end position="345"/>
    </location>
</feature>